<organism>
    <name type="scientific">Rhodopseudomonas palustris (strain BisB5)</name>
    <dbReference type="NCBI Taxonomy" id="316057"/>
    <lineage>
        <taxon>Bacteria</taxon>
        <taxon>Pseudomonadati</taxon>
        <taxon>Pseudomonadota</taxon>
        <taxon>Alphaproteobacteria</taxon>
        <taxon>Hyphomicrobiales</taxon>
        <taxon>Nitrobacteraceae</taxon>
        <taxon>Rhodopseudomonas</taxon>
    </lineage>
</organism>
<sequence>MNSSAIDADIPPSALAARFAAGPQLHAPEEAEKRLADWLGDVPADLAGAIRSVADRHPHVGVALRSIAEASPYLFDLIRADPARLLGLLRSDPEAGFVALLDRASAAVAAASDEAEVMAVLRKMKAEAALSIALCDIGGLWPVMQVTQALTDLAVNSVQMTLRFLLRQEAARGRIIPPNSDAPEQGSGLVVLAMGKMGAGELNYSSDIDLIVFYDLDAPTLAPDIEPQPFFVRVTQGLSRILQQRRHDGYVFRVDLRLRPDPASTPVALSTVSALNYYEREGRTWERAAMIKARACAGDLVAGEALLGDIAPFVWRKHLDFAALSDVHDMKRQMQTFRGQTEVAVEGHNVKVGRGGIREIEFFAQTQQLIAGGRHPELRVRPTLAALDILAARDWITYQARDELSVAYQFLRRVEHRIQMIADEQTHTLPDSVEAVERFSRFFGYESREAFARDLLAYFDCVQGHYGKLFEGDPTGTVKLPIDYAGGPDDTGLLDHLHGLGYKKPLMVATTLQQWMTGGYRILKVETTQRAFHEFVPMLIEELARAEEPDNAVNAFDRLLQALHRGGRLISLLSQNRDLLTLVALVLGAAPRLGDMLARQPQILDGLIDPRFFGAMPDRAELSARLAATLADAGPYEEFLDRLRLFGQESLFLIGTRILSGTVSTQQASVAFADVAEGIVGTVHDLVSEQFISQYGRIKDQQTAILAMGKLGSREMTASSDLDLILIYDFDHEQPDSDGERSLQGAQYFARFTQRLISAFTTRTNYGVLYDVDMRLRPSGRAGPLASRLDSFAEYQEVEAWTWEHLALTRARVISASPEFRERIEQVIRAVLTRPRDAAIIANDVAEMRHAIAQEKGEDDVWDMKYAAGGMVDIDFIAQYLQLVHAAATPEILGVSTLGAIDNAARLGVLAQSDAEVLRPAARLYHDLTQILRLCVSDKFKPETAGEDLLRVLVRAGDAPDFSSLEARVKETQAEVRAIFNRLIGGDSA</sequence>
<keyword id="KW-0067">ATP-binding</keyword>
<keyword id="KW-0460">Magnesium</keyword>
<keyword id="KW-0511">Multifunctional enzyme</keyword>
<keyword id="KW-0547">Nucleotide-binding</keyword>
<keyword id="KW-0548">Nucleotidyltransferase</keyword>
<keyword id="KW-0808">Transferase</keyword>
<accession>Q139J0</accession>
<protein>
    <recommendedName>
        <fullName evidence="1">Bifunctional glutamine synthetase adenylyltransferase/adenylyl-removing enzyme</fullName>
    </recommendedName>
    <alternativeName>
        <fullName evidence="1">ATP:glutamine synthetase adenylyltransferase</fullName>
    </alternativeName>
    <alternativeName>
        <fullName evidence="1">ATase</fullName>
    </alternativeName>
    <domain>
        <recommendedName>
            <fullName evidence="1">Glutamine synthetase adenylyl-L-tyrosine phosphorylase</fullName>
            <ecNumber evidence="1">2.7.7.89</ecNumber>
        </recommendedName>
        <alternativeName>
            <fullName evidence="1">Adenylyl removase</fullName>
            <shortName evidence="1">AR</shortName>
            <shortName evidence="1">AT-N</shortName>
        </alternativeName>
    </domain>
    <domain>
        <recommendedName>
            <fullName evidence="1">Glutamine synthetase adenylyl transferase</fullName>
            <ecNumber evidence="1">2.7.7.42</ecNumber>
        </recommendedName>
        <alternativeName>
            <fullName evidence="1">Adenylyl transferase</fullName>
            <shortName evidence="1">AT</shortName>
            <shortName evidence="1">AT-C</shortName>
        </alternativeName>
    </domain>
</protein>
<gene>
    <name evidence="1" type="primary">glnE</name>
    <name type="ordered locus">RPD_2014</name>
</gene>
<reference key="1">
    <citation type="submission" date="2006-03" db="EMBL/GenBank/DDBJ databases">
        <title>Complete sequence of Rhodopseudomonas palustris BisB5.</title>
        <authorList>
            <consortium name="US DOE Joint Genome Institute"/>
            <person name="Copeland A."/>
            <person name="Lucas S."/>
            <person name="Lapidus A."/>
            <person name="Barry K."/>
            <person name="Detter J.C."/>
            <person name="Glavina del Rio T."/>
            <person name="Hammon N."/>
            <person name="Israni S."/>
            <person name="Dalin E."/>
            <person name="Tice H."/>
            <person name="Pitluck S."/>
            <person name="Chain P."/>
            <person name="Malfatti S."/>
            <person name="Shin M."/>
            <person name="Vergez L."/>
            <person name="Schmutz J."/>
            <person name="Larimer F."/>
            <person name="Land M."/>
            <person name="Hauser L."/>
            <person name="Pelletier D.A."/>
            <person name="Kyrpides N."/>
            <person name="Lykidis A."/>
            <person name="Oda Y."/>
            <person name="Harwood C.S."/>
            <person name="Richardson P."/>
        </authorList>
    </citation>
    <scope>NUCLEOTIDE SEQUENCE [LARGE SCALE GENOMIC DNA]</scope>
    <source>
        <strain>BisB5</strain>
    </source>
</reference>
<comment type="function">
    <text evidence="1">Involved in the regulation of glutamine synthetase GlnA, a key enzyme in the process to assimilate ammonia. When cellular nitrogen levels are high, the C-terminal adenylyl transferase (AT) inactivates GlnA by covalent transfer of an adenylyl group from ATP to specific tyrosine residue of GlnA, thus reducing its activity. Conversely, when nitrogen levels are low, the N-terminal adenylyl removase (AR) activates GlnA by removing the adenylyl group by phosphorolysis, increasing its activity. The regulatory region of GlnE binds the signal transduction protein PII (GlnB) which indicates the nitrogen status of the cell.</text>
</comment>
<comment type="catalytic activity">
    <reaction evidence="1">
        <text>[glutamine synthetase]-O(4)-(5'-adenylyl)-L-tyrosine + phosphate = [glutamine synthetase]-L-tyrosine + ADP</text>
        <dbReference type="Rhea" id="RHEA:43716"/>
        <dbReference type="Rhea" id="RHEA-COMP:10660"/>
        <dbReference type="Rhea" id="RHEA-COMP:10661"/>
        <dbReference type="ChEBI" id="CHEBI:43474"/>
        <dbReference type="ChEBI" id="CHEBI:46858"/>
        <dbReference type="ChEBI" id="CHEBI:83624"/>
        <dbReference type="ChEBI" id="CHEBI:456216"/>
        <dbReference type="EC" id="2.7.7.89"/>
    </reaction>
</comment>
<comment type="catalytic activity">
    <reaction evidence="1">
        <text>[glutamine synthetase]-L-tyrosine + ATP = [glutamine synthetase]-O(4)-(5'-adenylyl)-L-tyrosine + diphosphate</text>
        <dbReference type="Rhea" id="RHEA:18589"/>
        <dbReference type="Rhea" id="RHEA-COMP:10660"/>
        <dbReference type="Rhea" id="RHEA-COMP:10661"/>
        <dbReference type="ChEBI" id="CHEBI:30616"/>
        <dbReference type="ChEBI" id="CHEBI:33019"/>
        <dbReference type="ChEBI" id="CHEBI:46858"/>
        <dbReference type="ChEBI" id="CHEBI:83624"/>
        <dbReference type="EC" id="2.7.7.42"/>
    </reaction>
</comment>
<comment type="cofactor">
    <cofactor evidence="1">
        <name>Mg(2+)</name>
        <dbReference type="ChEBI" id="CHEBI:18420"/>
    </cofactor>
</comment>
<comment type="similarity">
    <text evidence="1">Belongs to the GlnE family.</text>
</comment>
<dbReference type="EC" id="2.7.7.89" evidence="1"/>
<dbReference type="EC" id="2.7.7.42" evidence="1"/>
<dbReference type="EMBL" id="CP000283">
    <property type="protein sequence ID" value="ABE39249.1"/>
    <property type="molecule type" value="Genomic_DNA"/>
</dbReference>
<dbReference type="SMR" id="Q139J0"/>
<dbReference type="STRING" id="316057.RPD_2014"/>
<dbReference type="KEGG" id="rpd:RPD_2014"/>
<dbReference type="eggNOG" id="COG1391">
    <property type="taxonomic scope" value="Bacteria"/>
</dbReference>
<dbReference type="HOGENOM" id="CLU_006233_0_0_5"/>
<dbReference type="BioCyc" id="RPAL316057:RPD_RS10115-MONOMER"/>
<dbReference type="Proteomes" id="UP000001818">
    <property type="component" value="Chromosome"/>
</dbReference>
<dbReference type="GO" id="GO:0005829">
    <property type="term" value="C:cytosol"/>
    <property type="evidence" value="ECO:0007669"/>
    <property type="project" value="TreeGrafter"/>
</dbReference>
<dbReference type="GO" id="GO:0008882">
    <property type="term" value="F:[glutamate-ammonia-ligase] adenylyltransferase activity"/>
    <property type="evidence" value="ECO:0007669"/>
    <property type="project" value="UniProtKB-UniRule"/>
</dbReference>
<dbReference type="GO" id="GO:0047388">
    <property type="term" value="F:[glutamine synthetase]-adenylyl-L-tyrosine phosphorylase activity"/>
    <property type="evidence" value="ECO:0007669"/>
    <property type="project" value="UniProtKB-EC"/>
</dbReference>
<dbReference type="GO" id="GO:0005524">
    <property type="term" value="F:ATP binding"/>
    <property type="evidence" value="ECO:0007669"/>
    <property type="project" value="UniProtKB-UniRule"/>
</dbReference>
<dbReference type="GO" id="GO:0000287">
    <property type="term" value="F:magnesium ion binding"/>
    <property type="evidence" value="ECO:0007669"/>
    <property type="project" value="UniProtKB-UniRule"/>
</dbReference>
<dbReference type="GO" id="GO:0000820">
    <property type="term" value="P:regulation of glutamine family amino acid metabolic process"/>
    <property type="evidence" value="ECO:0007669"/>
    <property type="project" value="UniProtKB-UniRule"/>
</dbReference>
<dbReference type="CDD" id="cd05401">
    <property type="entry name" value="NT_GlnE_GlnD_like"/>
    <property type="match status" value="2"/>
</dbReference>
<dbReference type="FunFam" id="1.20.120.330:FF:000028">
    <property type="entry name" value="Bifunctional glutamine synthetase adenylyltransferase/adenylyl-removing enzyme"/>
    <property type="match status" value="1"/>
</dbReference>
<dbReference type="FunFam" id="3.30.460.10:FF:000081">
    <property type="entry name" value="Bifunctional glutamine synthetase adenylyltransferase/adenylyl-removing enzyme"/>
    <property type="match status" value="1"/>
</dbReference>
<dbReference type="Gene3D" id="1.20.120.1510">
    <property type="match status" value="1"/>
</dbReference>
<dbReference type="Gene3D" id="3.30.460.10">
    <property type="entry name" value="Beta Polymerase, domain 2"/>
    <property type="match status" value="2"/>
</dbReference>
<dbReference type="Gene3D" id="1.20.120.330">
    <property type="entry name" value="Nucleotidyltransferases domain 2"/>
    <property type="match status" value="2"/>
</dbReference>
<dbReference type="HAMAP" id="MF_00802">
    <property type="entry name" value="GlnE"/>
    <property type="match status" value="1"/>
</dbReference>
<dbReference type="InterPro" id="IPR023057">
    <property type="entry name" value="GlnE"/>
</dbReference>
<dbReference type="InterPro" id="IPR005190">
    <property type="entry name" value="GlnE_rpt_dom"/>
</dbReference>
<dbReference type="InterPro" id="IPR043519">
    <property type="entry name" value="NT_sf"/>
</dbReference>
<dbReference type="InterPro" id="IPR013546">
    <property type="entry name" value="PII_UdlTrfase/GS_AdlTrfase"/>
</dbReference>
<dbReference type="NCBIfam" id="NF008292">
    <property type="entry name" value="PRK11072.1"/>
    <property type="match status" value="1"/>
</dbReference>
<dbReference type="NCBIfam" id="NF010706">
    <property type="entry name" value="PRK14108.1"/>
    <property type="match status" value="1"/>
</dbReference>
<dbReference type="PANTHER" id="PTHR30621:SF0">
    <property type="entry name" value="BIFUNCTIONAL GLUTAMINE SYNTHETASE ADENYLYLTRANSFERASE_ADENYLYL-REMOVING ENZYME"/>
    <property type="match status" value="1"/>
</dbReference>
<dbReference type="PANTHER" id="PTHR30621">
    <property type="entry name" value="GLUTAMINE SYNTHETASE ADENYLYLTRANSFERASE"/>
    <property type="match status" value="1"/>
</dbReference>
<dbReference type="Pfam" id="PF08335">
    <property type="entry name" value="GlnD_UR_UTase"/>
    <property type="match status" value="2"/>
</dbReference>
<dbReference type="Pfam" id="PF03710">
    <property type="entry name" value="GlnE"/>
    <property type="match status" value="2"/>
</dbReference>
<dbReference type="SUPFAM" id="SSF81301">
    <property type="entry name" value="Nucleotidyltransferase"/>
    <property type="match status" value="2"/>
</dbReference>
<dbReference type="SUPFAM" id="SSF81593">
    <property type="entry name" value="Nucleotidyltransferase substrate binding subunit/domain"/>
    <property type="match status" value="2"/>
</dbReference>
<name>GLNE_RHOPS</name>
<evidence type="ECO:0000255" key="1">
    <source>
        <dbReference type="HAMAP-Rule" id="MF_00802"/>
    </source>
</evidence>
<proteinExistence type="inferred from homology"/>
<feature type="chain" id="PRO_1000212988" description="Bifunctional glutamine synthetase adenylyltransferase/adenylyl-removing enzyme">
    <location>
        <begin position="1"/>
        <end position="989"/>
    </location>
</feature>
<feature type="region of interest" description="Adenylyl removase" evidence="1">
    <location>
        <begin position="1"/>
        <end position="474"/>
    </location>
</feature>
<feature type="region of interest" description="Adenylyl transferase" evidence="1">
    <location>
        <begin position="480"/>
        <end position="989"/>
    </location>
</feature>